<reference key="1">
    <citation type="journal article" date="2000" name="Nature">
        <title>DNA sequence of both chromosomes of the cholera pathogen Vibrio cholerae.</title>
        <authorList>
            <person name="Heidelberg J.F."/>
            <person name="Eisen J.A."/>
            <person name="Nelson W.C."/>
            <person name="Clayton R.A."/>
            <person name="Gwinn M.L."/>
            <person name="Dodson R.J."/>
            <person name="Haft D.H."/>
            <person name="Hickey E.K."/>
            <person name="Peterson J.D."/>
            <person name="Umayam L.A."/>
            <person name="Gill S.R."/>
            <person name="Nelson K.E."/>
            <person name="Read T.D."/>
            <person name="Tettelin H."/>
            <person name="Richardson D.L."/>
            <person name="Ermolaeva M.D."/>
            <person name="Vamathevan J.J."/>
            <person name="Bass S."/>
            <person name="Qin H."/>
            <person name="Dragoi I."/>
            <person name="Sellers P."/>
            <person name="McDonald L.A."/>
            <person name="Utterback T.R."/>
            <person name="Fleischmann R.D."/>
            <person name="Nierman W.C."/>
            <person name="White O."/>
            <person name="Salzberg S.L."/>
            <person name="Smith H.O."/>
            <person name="Colwell R.R."/>
            <person name="Mekalanos J.J."/>
            <person name="Venter J.C."/>
            <person name="Fraser C.M."/>
        </authorList>
    </citation>
    <scope>NUCLEOTIDE SEQUENCE [LARGE SCALE GENOMIC DNA]</scope>
    <source>
        <strain>ATCC 39315 / El Tor Inaba N16961</strain>
    </source>
</reference>
<dbReference type="EC" id="4.2.1.59" evidence="1"/>
<dbReference type="EMBL" id="AE003852">
    <property type="protein sequence ID" value="AAF95393.1"/>
    <property type="molecule type" value="Genomic_DNA"/>
</dbReference>
<dbReference type="PIR" id="C82101">
    <property type="entry name" value="C82101"/>
</dbReference>
<dbReference type="RefSeq" id="NP_231880.1">
    <property type="nucleotide sequence ID" value="NC_002505.1"/>
</dbReference>
<dbReference type="SMR" id="Q9KPW3"/>
<dbReference type="STRING" id="243277.VC_2249"/>
<dbReference type="DNASU" id="2613171"/>
<dbReference type="EnsemblBacteria" id="AAF95393">
    <property type="protein sequence ID" value="AAF95393"/>
    <property type="gene ID" value="VC_2249"/>
</dbReference>
<dbReference type="KEGG" id="vch:VC_2249"/>
<dbReference type="PATRIC" id="fig|243277.26.peg.2145"/>
<dbReference type="eggNOG" id="COG0764">
    <property type="taxonomic scope" value="Bacteria"/>
</dbReference>
<dbReference type="HOGENOM" id="CLU_078912_1_0_6"/>
<dbReference type="Proteomes" id="UP000000584">
    <property type="component" value="Chromosome 1"/>
</dbReference>
<dbReference type="GO" id="GO:0005737">
    <property type="term" value="C:cytoplasm"/>
    <property type="evidence" value="ECO:0007669"/>
    <property type="project" value="UniProtKB-SubCell"/>
</dbReference>
<dbReference type="GO" id="GO:0016020">
    <property type="term" value="C:membrane"/>
    <property type="evidence" value="ECO:0007669"/>
    <property type="project" value="GOC"/>
</dbReference>
<dbReference type="GO" id="GO:0019171">
    <property type="term" value="F:(3R)-hydroxyacyl-[acyl-carrier-protein] dehydratase activity"/>
    <property type="evidence" value="ECO:0007669"/>
    <property type="project" value="UniProtKB-EC"/>
</dbReference>
<dbReference type="GO" id="GO:0006633">
    <property type="term" value="P:fatty acid biosynthetic process"/>
    <property type="evidence" value="ECO:0007669"/>
    <property type="project" value="UniProtKB-UniRule"/>
</dbReference>
<dbReference type="GO" id="GO:0009245">
    <property type="term" value="P:lipid A biosynthetic process"/>
    <property type="evidence" value="ECO:0007669"/>
    <property type="project" value="UniProtKB-UniRule"/>
</dbReference>
<dbReference type="CDD" id="cd01288">
    <property type="entry name" value="FabZ"/>
    <property type="match status" value="1"/>
</dbReference>
<dbReference type="FunFam" id="3.10.129.10:FF:000001">
    <property type="entry name" value="3-hydroxyacyl-[acyl-carrier-protein] dehydratase FabZ"/>
    <property type="match status" value="1"/>
</dbReference>
<dbReference type="Gene3D" id="3.10.129.10">
    <property type="entry name" value="Hotdog Thioesterase"/>
    <property type="match status" value="1"/>
</dbReference>
<dbReference type="HAMAP" id="MF_00406">
    <property type="entry name" value="FabZ"/>
    <property type="match status" value="1"/>
</dbReference>
<dbReference type="InterPro" id="IPR013114">
    <property type="entry name" value="FabA_FabZ"/>
</dbReference>
<dbReference type="InterPro" id="IPR010084">
    <property type="entry name" value="FabZ"/>
</dbReference>
<dbReference type="InterPro" id="IPR029069">
    <property type="entry name" value="HotDog_dom_sf"/>
</dbReference>
<dbReference type="NCBIfam" id="TIGR01750">
    <property type="entry name" value="fabZ"/>
    <property type="match status" value="1"/>
</dbReference>
<dbReference type="NCBIfam" id="NF000582">
    <property type="entry name" value="PRK00006.1"/>
    <property type="match status" value="1"/>
</dbReference>
<dbReference type="PANTHER" id="PTHR30272">
    <property type="entry name" value="3-HYDROXYACYL-[ACYL-CARRIER-PROTEIN] DEHYDRATASE"/>
    <property type="match status" value="1"/>
</dbReference>
<dbReference type="PANTHER" id="PTHR30272:SF1">
    <property type="entry name" value="3-HYDROXYACYL-[ACYL-CARRIER-PROTEIN] DEHYDRATASE"/>
    <property type="match status" value="1"/>
</dbReference>
<dbReference type="Pfam" id="PF07977">
    <property type="entry name" value="FabA"/>
    <property type="match status" value="1"/>
</dbReference>
<dbReference type="SUPFAM" id="SSF54637">
    <property type="entry name" value="Thioesterase/thiol ester dehydrase-isomerase"/>
    <property type="match status" value="1"/>
</dbReference>
<gene>
    <name evidence="1" type="primary">fabZ</name>
    <name type="ordered locus">VC_2249</name>
</gene>
<proteinExistence type="inferred from homology"/>
<name>FABZ_VIBCH</name>
<protein>
    <recommendedName>
        <fullName evidence="1">3-hydroxyacyl-[acyl-carrier-protein] dehydratase FabZ</fullName>
        <ecNumber evidence="1">4.2.1.59</ecNumber>
    </recommendedName>
    <alternativeName>
        <fullName evidence="1">(3R)-hydroxymyristoyl-[acyl-carrier-protein] dehydratase</fullName>
        <shortName evidence="1">(3R)-hydroxymyristoyl-ACP dehydrase</shortName>
    </alternativeName>
    <alternativeName>
        <fullName evidence="1">Beta-hydroxyacyl-ACP dehydratase</fullName>
    </alternativeName>
</protein>
<sequence>MMTLTTDKKTMNITEIQSLLPHRYPFLLIDRVTDYEEGKYLIGLKNVSVNEPQFTGHFPQLPVFPGVLILEAMAQATGLLAFKTFGAPKENELYYFASIDEAKFRKPVTPGDQLMVEVEFLKERRGIALFNGVAKVDGDVVCSAQLKCARREF</sequence>
<evidence type="ECO:0000255" key="1">
    <source>
        <dbReference type="HAMAP-Rule" id="MF_00406"/>
    </source>
</evidence>
<keyword id="KW-0963">Cytoplasm</keyword>
<keyword id="KW-0441">Lipid A biosynthesis</keyword>
<keyword id="KW-0444">Lipid biosynthesis</keyword>
<keyword id="KW-0443">Lipid metabolism</keyword>
<keyword id="KW-0456">Lyase</keyword>
<keyword id="KW-1185">Reference proteome</keyword>
<comment type="function">
    <text evidence="1">Involved in unsaturated fatty acids biosynthesis. Catalyzes the dehydration of short chain beta-hydroxyacyl-ACPs and long chain saturated and unsaturated beta-hydroxyacyl-ACPs.</text>
</comment>
<comment type="catalytic activity">
    <reaction evidence="1">
        <text>a (3R)-hydroxyacyl-[ACP] = a (2E)-enoyl-[ACP] + H2O</text>
        <dbReference type="Rhea" id="RHEA:13097"/>
        <dbReference type="Rhea" id="RHEA-COMP:9925"/>
        <dbReference type="Rhea" id="RHEA-COMP:9945"/>
        <dbReference type="ChEBI" id="CHEBI:15377"/>
        <dbReference type="ChEBI" id="CHEBI:78784"/>
        <dbReference type="ChEBI" id="CHEBI:78827"/>
        <dbReference type="EC" id="4.2.1.59"/>
    </reaction>
</comment>
<comment type="subcellular location">
    <subcellularLocation>
        <location evidence="1">Cytoplasm</location>
    </subcellularLocation>
</comment>
<comment type="similarity">
    <text evidence="1">Belongs to the thioester dehydratase family. FabZ subfamily.</text>
</comment>
<feature type="chain" id="PRO_0000091757" description="3-hydroxyacyl-[acyl-carrier-protein] dehydratase FabZ">
    <location>
        <begin position="1"/>
        <end position="153"/>
    </location>
</feature>
<feature type="active site" evidence="1">
    <location>
        <position position="57"/>
    </location>
</feature>
<organism>
    <name type="scientific">Vibrio cholerae serotype O1 (strain ATCC 39315 / El Tor Inaba N16961)</name>
    <dbReference type="NCBI Taxonomy" id="243277"/>
    <lineage>
        <taxon>Bacteria</taxon>
        <taxon>Pseudomonadati</taxon>
        <taxon>Pseudomonadota</taxon>
        <taxon>Gammaproteobacteria</taxon>
        <taxon>Vibrionales</taxon>
        <taxon>Vibrionaceae</taxon>
        <taxon>Vibrio</taxon>
    </lineage>
</organism>
<accession>Q9KPW3</accession>